<organism>
    <name type="scientific">Anaplasma phagocytophilum (strain HZ)</name>
    <dbReference type="NCBI Taxonomy" id="212042"/>
    <lineage>
        <taxon>Bacteria</taxon>
        <taxon>Pseudomonadati</taxon>
        <taxon>Pseudomonadota</taxon>
        <taxon>Alphaproteobacteria</taxon>
        <taxon>Rickettsiales</taxon>
        <taxon>Anaplasmataceae</taxon>
        <taxon>Anaplasma</taxon>
        <taxon>phagocytophilum group</taxon>
    </lineage>
</organism>
<reference key="1">
    <citation type="journal article" date="2006" name="PLoS Genet.">
        <title>Comparative genomics of emerging human ehrlichiosis agents.</title>
        <authorList>
            <person name="Dunning Hotopp J.C."/>
            <person name="Lin M."/>
            <person name="Madupu R."/>
            <person name="Crabtree J."/>
            <person name="Angiuoli S.V."/>
            <person name="Eisen J.A."/>
            <person name="Seshadri R."/>
            <person name="Ren Q."/>
            <person name="Wu M."/>
            <person name="Utterback T.R."/>
            <person name="Smith S."/>
            <person name="Lewis M."/>
            <person name="Khouri H."/>
            <person name="Zhang C."/>
            <person name="Niu H."/>
            <person name="Lin Q."/>
            <person name="Ohashi N."/>
            <person name="Zhi N."/>
            <person name="Nelson W.C."/>
            <person name="Brinkac L.M."/>
            <person name="Dodson R.J."/>
            <person name="Rosovitz M.J."/>
            <person name="Sundaram J.P."/>
            <person name="Daugherty S.C."/>
            <person name="Davidsen T."/>
            <person name="Durkin A.S."/>
            <person name="Gwinn M.L."/>
            <person name="Haft D.H."/>
            <person name="Selengut J.D."/>
            <person name="Sullivan S.A."/>
            <person name="Zafar N."/>
            <person name="Zhou L."/>
            <person name="Benahmed F."/>
            <person name="Forberger H."/>
            <person name="Halpin R."/>
            <person name="Mulligan S."/>
            <person name="Robinson J."/>
            <person name="White O."/>
            <person name="Rikihisa Y."/>
            <person name="Tettelin H."/>
        </authorList>
    </citation>
    <scope>NUCLEOTIDE SEQUENCE [LARGE SCALE GENOMIC DNA]</scope>
    <source>
        <strain>HZ</strain>
    </source>
</reference>
<dbReference type="EC" id="2.3.1.181" evidence="1"/>
<dbReference type="EMBL" id="CP000235">
    <property type="protein sequence ID" value="ABD44061.1"/>
    <property type="molecule type" value="Genomic_DNA"/>
</dbReference>
<dbReference type="SMR" id="Q2GL91"/>
<dbReference type="STRING" id="212042.APH_0243"/>
<dbReference type="PaxDb" id="212042-APH_0243"/>
<dbReference type="EnsemblBacteria" id="ABD44061">
    <property type="protein sequence ID" value="ABD44061"/>
    <property type="gene ID" value="APH_0243"/>
</dbReference>
<dbReference type="KEGG" id="aph:APH_0243"/>
<dbReference type="eggNOG" id="COG0321">
    <property type="taxonomic scope" value="Bacteria"/>
</dbReference>
<dbReference type="HOGENOM" id="CLU_035168_3_0_5"/>
<dbReference type="UniPathway" id="UPA00538">
    <property type="reaction ID" value="UER00592"/>
</dbReference>
<dbReference type="Proteomes" id="UP000001943">
    <property type="component" value="Chromosome"/>
</dbReference>
<dbReference type="GO" id="GO:0005737">
    <property type="term" value="C:cytoplasm"/>
    <property type="evidence" value="ECO:0007669"/>
    <property type="project" value="UniProtKB-SubCell"/>
</dbReference>
<dbReference type="GO" id="GO:0033819">
    <property type="term" value="F:lipoyl(octanoyl) transferase activity"/>
    <property type="evidence" value="ECO:0007669"/>
    <property type="project" value="UniProtKB-EC"/>
</dbReference>
<dbReference type="GO" id="GO:0036211">
    <property type="term" value="P:protein modification process"/>
    <property type="evidence" value="ECO:0007669"/>
    <property type="project" value="InterPro"/>
</dbReference>
<dbReference type="CDD" id="cd16444">
    <property type="entry name" value="LipB"/>
    <property type="match status" value="1"/>
</dbReference>
<dbReference type="Gene3D" id="3.30.930.10">
    <property type="entry name" value="Bira Bifunctional Protein, Domain 2"/>
    <property type="match status" value="1"/>
</dbReference>
<dbReference type="HAMAP" id="MF_00013">
    <property type="entry name" value="LipB"/>
    <property type="match status" value="1"/>
</dbReference>
<dbReference type="InterPro" id="IPR045864">
    <property type="entry name" value="aa-tRNA-synth_II/BPL/LPL"/>
</dbReference>
<dbReference type="InterPro" id="IPR004143">
    <property type="entry name" value="BPL_LPL_catalytic"/>
</dbReference>
<dbReference type="InterPro" id="IPR000544">
    <property type="entry name" value="Octanoyltransferase"/>
</dbReference>
<dbReference type="NCBIfam" id="TIGR00214">
    <property type="entry name" value="lipB"/>
    <property type="match status" value="1"/>
</dbReference>
<dbReference type="NCBIfam" id="NF010921">
    <property type="entry name" value="PRK14341.1"/>
    <property type="match status" value="1"/>
</dbReference>
<dbReference type="NCBIfam" id="NF010925">
    <property type="entry name" value="PRK14345.1"/>
    <property type="match status" value="1"/>
</dbReference>
<dbReference type="PANTHER" id="PTHR10993:SF7">
    <property type="entry name" value="LIPOYLTRANSFERASE 2, MITOCHONDRIAL-RELATED"/>
    <property type="match status" value="1"/>
</dbReference>
<dbReference type="PANTHER" id="PTHR10993">
    <property type="entry name" value="OCTANOYLTRANSFERASE"/>
    <property type="match status" value="1"/>
</dbReference>
<dbReference type="Pfam" id="PF21948">
    <property type="entry name" value="LplA-B_cat"/>
    <property type="match status" value="1"/>
</dbReference>
<dbReference type="PIRSF" id="PIRSF016262">
    <property type="entry name" value="LPLase"/>
    <property type="match status" value="1"/>
</dbReference>
<dbReference type="SUPFAM" id="SSF55681">
    <property type="entry name" value="Class II aaRS and biotin synthetases"/>
    <property type="match status" value="1"/>
</dbReference>
<dbReference type="PROSITE" id="PS51733">
    <property type="entry name" value="BPL_LPL_CATALYTIC"/>
    <property type="match status" value="1"/>
</dbReference>
<comment type="function">
    <text evidence="1">Catalyzes the transfer of endogenously produced octanoic acid from octanoyl-acyl-carrier-protein onto the lipoyl domains of lipoate-dependent enzymes. Lipoyl-ACP can also act as a substrate although octanoyl-ACP is likely to be the physiological substrate.</text>
</comment>
<comment type="catalytic activity">
    <reaction evidence="1">
        <text>octanoyl-[ACP] + L-lysyl-[protein] = N(6)-octanoyl-L-lysyl-[protein] + holo-[ACP] + H(+)</text>
        <dbReference type="Rhea" id="RHEA:17665"/>
        <dbReference type="Rhea" id="RHEA-COMP:9636"/>
        <dbReference type="Rhea" id="RHEA-COMP:9685"/>
        <dbReference type="Rhea" id="RHEA-COMP:9752"/>
        <dbReference type="Rhea" id="RHEA-COMP:9928"/>
        <dbReference type="ChEBI" id="CHEBI:15378"/>
        <dbReference type="ChEBI" id="CHEBI:29969"/>
        <dbReference type="ChEBI" id="CHEBI:64479"/>
        <dbReference type="ChEBI" id="CHEBI:78463"/>
        <dbReference type="ChEBI" id="CHEBI:78809"/>
        <dbReference type="EC" id="2.3.1.181"/>
    </reaction>
</comment>
<comment type="pathway">
    <text evidence="1">Protein modification; protein lipoylation via endogenous pathway; protein N(6)-(lipoyl)lysine from octanoyl-[acyl-carrier-protein]: step 1/2.</text>
</comment>
<comment type="subcellular location">
    <subcellularLocation>
        <location evidence="1">Cytoplasm</location>
    </subcellularLocation>
</comment>
<comment type="miscellaneous">
    <text evidence="1">In the reaction, the free carboxyl group of octanoic acid is attached via an amide linkage to the epsilon-amino group of a specific lysine residue of lipoyl domains of lipoate-dependent enzymes.</text>
</comment>
<comment type="similarity">
    <text evidence="1">Belongs to the LipB family.</text>
</comment>
<keyword id="KW-0012">Acyltransferase</keyword>
<keyword id="KW-0963">Cytoplasm</keyword>
<keyword id="KW-0808">Transferase</keyword>
<evidence type="ECO:0000255" key="1">
    <source>
        <dbReference type="HAMAP-Rule" id="MF_00013"/>
    </source>
</evidence>
<evidence type="ECO:0000255" key="2">
    <source>
        <dbReference type="PROSITE-ProRule" id="PRU01067"/>
    </source>
</evidence>
<sequence length="208" mass="23461">MDIEWQISSGLVEYEVAVNAMVSRVDKIVQGSEREMVWLLEHPPVYTAGTSANSSDLLIDNLFPVIKTTRGGKYSYHGPGQRVVYVMLDLKRRNRCDIRAYVRDLGVWIVNTLAEFAIDSYFSSENIGVWVQNDMHSEKIAAFGIRLRRWVTYHGVAINISTDLTHYSGIVPCGILGSGVTSLRALGKEVTFEQFDSALKKEFYKVFA</sequence>
<name>LIPB_ANAPZ</name>
<gene>
    <name evidence="1" type="primary">lipB</name>
    <name type="ordered locus">APH_0243</name>
</gene>
<accession>Q2GL91</accession>
<feature type="chain" id="PRO_0000242705" description="Octanoyltransferase">
    <location>
        <begin position="1"/>
        <end position="208"/>
    </location>
</feature>
<feature type="domain" description="BPL/LPL catalytic" evidence="2">
    <location>
        <begin position="31"/>
        <end position="208"/>
    </location>
</feature>
<feature type="active site" description="Acyl-thioester intermediate" evidence="1">
    <location>
        <position position="173"/>
    </location>
</feature>
<feature type="binding site" evidence="1">
    <location>
        <begin position="70"/>
        <end position="77"/>
    </location>
    <ligand>
        <name>substrate</name>
    </ligand>
</feature>
<feature type="binding site" evidence="1">
    <location>
        <begin position="142"/>
        <end position="144"/>
    </location>
    <ligand>
        <name>substrate</name>
    </ligand>
</feature>
<feature type="binding site" evidence="1">
    <location>
        <begin position="155"/>
        <end position="157"/>
    </location>
    <ligand>
        <name>substrate</name>
    </ligand>
</feature>
<feature type="site" description="Lowers pKa of active site Cys" evidence="1">
    <location>
        <position position="139"/>
    </location>
</feature>
<protein>
    <recommendedName>
        <fullName evidence="1">Octanoyltransferase</fullName>
        <ecNumber evidence="1">2.3.1.181</ecNumber>
    </recommendedName>
    <alternativeName>
        <fullName evidence="1">Lipoate-protein ligase B</fullName>
    </alternativeName>
    <alternativeName>
        <fullName evidence="1">Lipoyl/octanoyl transferase</fullName>
    </alternativeName>
    <alternativeName>
        <fullName evidence="1">Octanoyl-[acyl-carrier-protein]-protein N-octanoyltransferase</fullName>
    </alternativeName>
</protein>
<proteinExistence type="inferred from homology"/>